<protein>
    <recommendedName>
        <fullName evidence="1">Sec-independent protein translocase protein TatA</fullName>
    </recommendedName>
</protein>
<name>TATA_LEPIC</name>
<comment type="function">
    <text evidence="1">Part of the twin-arginine translocation (Tat) system that transports large folded proteins containing a characteristic twin-arginine motif in their signal peptide across membranes. TatA could form the protein-conducting channel of the Tat system.</text>
</comment>
<comment type="subunit">
    <text evidence="1">Forms a complex with TatC.</text>
</comment>
<comment type="subcellular location">
    <subcellularLocation>
        <location evidence="1">Cell inner membrane</location>
        <topology evidence="1">Single-pass membrane protein</topology>
    </subcellularLocation>
</comment>
<comment type="similarity">
    <text evidence="1">Belongs to the TatA/E family.</text>
</comment>
<comment type="sequence caution" evidence="3">
    <conflict type="erroneous initiation">
        <sequence resource="EMBL-CDS" id="AAS70556"/>
    </conflict>
    <text>Extended N-terminus.</text>
</comment>
<feature type="chain" id="PRO_0000097942" description="Sec-independent protein translocase protein TatA">
    <location>
        <begin position="1"/>
        <end position="85"/>
    </location>
</feature>
<feature type="transmembrane region" description="Helical" evidence="1">
    <location>
        <begin position="7"/>
        <end position="27"/>
    </location>
</feature>
<feature type="region of interest" description="Disordered" evidence="2">
    <location>
        <begin position="50"/>
        <end position="85"/>
    </location>
</feature>
<feature type="compositionally biased region" description="Basic and acidic residues" evidence="2">
    <location>
        <begin position="64"/>
        <end position="76"/>
    </location>
</feature>
<reference key="1">
    <citation type="journal article" date="2004" name="J. Bacteriol.">
        <title>Comparative genomics of two Leptospira interrogans serovars reveals novel insights into physiology and pathogenesis.</title>
        <authorList>
            <person name="Nascimento A.L.T.O."/>
            <person name="Ko A.I."/>
            <person name="Martins E.A.L."/>
            <person name="Monteiro-Vitorello C.B."/>
            <person name="Ho P.L."/>
            <person name="Haake D.A."/>
            <person name="Verjovski-Almeida S."/>
            <person name="Hartskeerl R.A."/>
            <person name="Marques M.V."/>
            <person name="Oliveira M.C."/>
            <person name="Menck C.F.M."/>
            <person name="Leite L.C.C."/>
            <person name="Carrer H."/>
            <person name="Coutinho L.L."/>
            <person name="Degrave W.M."/>
            <person name="Dellagostin O.A."/>
            <person name="El-Dorry H."/>
            <person name="Ferro E.S."/>
            <person name="Ferro M.I.T."/>
            <person name="Furlan L.R."/>
            <person name="Gamberini M."/>
            <person name="Giglioti E.A."/>
            <person name="Goes-Neto A."/>
            <person name="Goldman G.H."/>
            <person name="Goldman M.H.S."/>
            <person name="Harakava R."/>
            <person name="Jeronimo S.M.B."/>
            <person name="Junqueira-de-Azevedo I.L.M."/>
            <person name="Kimura E.T."/>
            <person name="Kuramae E.E."/>
            <person name="Lemos E.G.M."/>
            <person name="Lemos M.V.F."/>
            <person name="Marino C.L."/>
            <person name="Nunes L.R."/>
            <person name="de Oliveira R.C."/>
            <person name="Pereira G.G."/>
            <person name="Reis M.S."/>
            <person name="Schriefer A."/>
            <person name="Siqueira W.J."/>
            <person name="Sommer P."/>
            <person name="Tsai S.M."/>
            <person name="Simpson A.J.G."/>
            <person name="Ferro J.A."/>
            <person name="Camargo L.E.A."/>
            <person name="Kitajima J.P."/>
            <person name="Setubal J.C."/>
            <person name="Van Sluys M.A."/>
        </authorList>
    </citation>
    <scope>NUCLEOTIDE SEQUENCE [LARGE SCALE GENOMIC DNA]</scope>
    <source>
        <strain>Fiocruz L1-130</strain>
    </source>
</reference>
<accession>Q72QX8</accession>
<sequence>MFAPLAVFGSLGWTEILLILFIALLLFGGKRLPSLAKDLGDGIRSFRKSLTGESDDSSQQISQEQERSVPKEETKTSKSKKSKSA</sequence>
<keyword id="KW-0997">Cell inner membrane</keyword>
<keyword id="KW-1003">Cell membrane</keyword>
<keyword id="KW-0472">Membrane</keyword>
<keyword id="KW-0653">Protein transport</keyword>
<keyword id="KW-0811">Translocation</keyword>
<keyword id="KW-0812">Transmembrane</keyword>
<keyword id="KW-1133">Transmembrane helix</keyword>
<keyword id="KW-0813">Transport</keyword>
<evidence type="ECO:0000255" key="1">
    <source>
        <dbReference type="HAMAP-Rule" id="MF_00236"/>
    </source>
</evidence>
<evidence type="ECO:0000256" key="2">
    <source>
        <dbReference type="SAM" id="MobiDB-lite"/>
    </source>
</evidence>
<evidence type="ECO:0000305" key="3"/>
<dbReference type="EMBL" id="AE016823">
    <property type="protein sequence ID" value="AAS70556.1"/>
    <property type="status" value="ALT_INIT"/>
    <property type="molecule type" value="Genomic_DNA"/>
</dbReference>
<dbReference type="RefSeq" id="WP_000457916.1">
    <property type="nucleotide sequence ID" value="NC_005823.1"/>
</dbReference>
<dbReference type="SMR" id="Q72QX8"/>
<dbReference type="KEGG" id="lic:LIC_11980"/>
<dbReference type="HOGENOM" id="CLU_086034_5_4_12"/>
<dbReference type="Proteomes" id="UP000007037">
    <property type="component" value="Chromosome I"/>
</dbReference>
<dbReference type="GO" id="GO:0033281">
    <property type="term" value="C:TAT protein transport complex"/>
    <property type="evidence" value="ECO:0007669"/>
    <property type="project" value="UniProtKB-UniRule"/>
</dbReference>
<dbReference type="GO" id="GO:0008320">
    <property type="term" value="F:protein transmembrane transporter activity"/>
    <property type="evidence" value="ECO:0007669"/>
    <property type="project" value="UniProtKB-UniRule"/>
</dbReference>
<dbReference type="GO" id="GO:0043953">
    <property type="term" value="P:protein transport by the Tat complex"/>
    <property type="evidence" value="ECO:0007669"/>
    <property type="project" value="UniProtKB-UniRule"/>
</dbReference>
<dbReference type="Gene3D" id="1.20.5.3310">
    <property type="match status" value="1"/>
</dbReference>
<dbReference type="HAMAP" id="MF_00236">
    <property type="entry name" value="TatA_E"/>
    <property type="match status" value="1"/>
</dbReference>
<dbReference type="InterPro" id="IPR003369">
    <property type="entry name" value="TatA/B/E"/>
</dbReference>
<dbReference type="InterPro" id="IPR006312">
    <property type="entry name" value="TatA/E"/>
</dbReference>
<dbReference type="NCBIfam" id="TIGR01411">
    <property type="entry name" value="tatAE"/>
    <property type="match status" value="1"/>
</dbReference>
<dbReference type="PANTHER" id="PTHR42982">
    <property type="entry name" value="SEC-INDEPENDENT PROTEIN TRANSLOCASE PROTEIN TATA"/>
    <property type="match status" value="1"/>
</dbReference>
<dbReference type="PANTHER" id="PTHR42982:SF1">
    <property type="entry name" value="SEC-INDEPENDENT PROTEIN TRANSLOCASE PROTEIN TATA"/>
    <property type="match status" value="1"/>
</dbReference>
<dbReference type="Pfam" id="PF02416">
    <property type="entry name" value="TatA_B_E"/>
    <property type="match status" value="1"/>
</dbReference>
<dbReference type="PRINTS" id="PR01506">
    <property type="entry name" value="TATBPROTEIN"/>
</dbReference>
<proteinExistence type="inferred from homology"/>
<gene>
    <name evidence="1" type="primary">tatA</name>
    <name type="ordered locus">LIC_11980</name>
</gene>
<organism>
    <name type="scientific">Leptospira interrogans serogroup Icterohaemorrhagiae serovar copenhageni (strain Fiocruz L1-130)</name>
    <dbReference type="NCBI Taxonomy" id="267671"/>
    <lineage>
        <taxon>Bacteria</taxon>
        <taxon>Pseudomonadati</taxon>
        <taxon>Spirochaetota</taxon>
        <taxon>Spirochaetia</taxon>
        <taxon>Leptospirales</taxon>
        <taxon>Leptospiraceae</taxon>
        <taxon>Leptospira</taxon>
    </lineage>
</organism>